<evidence type="ECO:0000255" key="1">
    <source>
        <dbReference type="HAMAP-Rule" id="MF_01181"/>
    </source>
</evidence>
<sequence length="158" mass="18243">MLNQLDNLTERVRGSNKLVDRWLHVRKHLLVAYYNLVGIKPGKESYMRLNEKALDDFCQSLVDYLSAGHFSIYERILHKLEGNGQLARAAKIWPQLEANTQQIMDYYDSSLETAIDHDNYLEFQQVLSDIGEALEARFVLEDKLILLVLDAARVKHPA</sequence>
<name>RSD_ECOBW</name>
<protein>
    <recommendedName>
        <fullName evidence="1">Regulator of sigma D</fullName>
    </recommendedName>
</protein>
<dbReference type="EMBL" id="CP001396">
    <property type="protein sequence ID" value="ACR65575.1"/>
    <property type="molecule type" value="Genomic_DNA"/>
</dbReference>
<dbReference type="RefSeq" id="WP_000934302.1">
    <property type="nucleotide sequence ID" value="NC_012759.1"/>
</dbReference>
<dbReference type="SMR" id="C5A0T6"/>
<dbReference type="GeneID" id="75205513"/>
<dbReference type="KEGG" id="ebw:BWG_3655"/>
<dbReference type="HOGENOM" id="CLU_142729_0_0_6"/>
<dbReference type="GO" id="GO:0005737">
    <property type="term" value="C:cytoplasm"/>
    <property type="evidence" value="ECO:0007669"/>
    <property type="project" value="UniProtKB-SubCell"/>
</dbReference>
<dbReference type="GO" id="GO:0006355">
    <property type="term" value="P:regulation of DNA-templated transcription"/>
    <property type="evidence" value="ECO:0007669"/>
    <property type="project" value="InterPro"/>
</dbReference>
<dbReference type="FunFam" id="1.20.120.1370:FF:000001">
    <property type="entry name" value="Regulator of sigma D"/>
    <property type="match status" value="1"/>
</dbReference>
<dbReference type="Gene3D" id="1.20.120.1370">
    <property type="entry name" value="Regulator of RNA polymerase sigma(70) subunit, domain 4"/>
    <property type="match status" value="1"/>
</dbReference>
<dbReference type="HAMAP" id="MF_01181">
    <property type="entry name" value="Rsd"/>
    <property type="match status" value="1"/>
</dbReference>
<dbReference type="InterPro" id="IPR038309">
    <property type="entry name" value="Rsd/AlgQ_sf"/>
</dbReference>
<dbReference type="InterPro" id="IPR023785">
    <property type="entry name" value="Sigma70_reg_Rsd"/>
</dbReference>
<dbReference type="InterPro" id="IPR007448">
    <property type="entry name" value="Sigma70_reg_Rsd_AlgQ"/>
</dbReference>
<dbReference type="NCBIfam" id="NF008723">
    <property type="entry name" value="PRK11718.1"/>
    <property type="match status" value="1"/>
</dbReference>
<dbReference type="Pfam" id="PF04353">
    <property type="entry name" value="Rsd_AlgQ"/>
    <property type="match status" value="1"/>
</dbReference>
<dbReference type="PIRSF" id="PIRSF016548">
    <property type="entry name" value="Rsd_AlgQ"/>
    <property type="match status" value="1"/>
</dbReference>
<accession>C5A0T6</accession>
<feature type="chain" id="PRO_1000213758" description="Regulator of sigma D">
    <location>
        <begin position="1"/>
        <end position="158"/>
    </location>
</feature>
<gene>
    <name evidence="1" type="primary">rsd</name>
    <name type="ordered locus">BWG_3655</name>
</gene>
<organism>
    <name type="scientific">Escherichia coli (strain K12 / MC4100 / BW2952)</name>
    <dbReference type="NCBI Taxonomy" id="595496"/>
    <lineage>
        <taxon>Bacteria</taxon>
        <taxon>Pseudomonadati</taxon>
        <taxon>Pseudomonadota</taxon>
        <taxon>Gammaproteobacteria</taxon>
        <taxon>Enterobacterales</taxon>
        <taxon>Enterobacteriaceae</taxon>
        <taxon>Escherichia</taxon>
    </lineage>
</organism>
<reference key="1">
    <citation type="journal article" date="2009" name="J. Bacteriol.">
        <title>Genomic sequencing reveals regulatory mutations and recombinational events in the widely used MC4100 lineage of Escherichia coli K-12.</title>
        <authorList>
            <person name="Ferenci T."/>
            <person name="Zhou Z."/>
            <person name="Betteridge T."/>
            <person name="Ren Y."/>
            <person name="Liu Y."/>
            <person name="Feng L."/>
            <person name="Reeves P.R."/>
            <person name="Wang L."/>
        </authorList>
    </citation>
    <scope>NUCLEOTIDE SEQUENCE [LARGE SCALE GENOMIC DNA]</scope>
    <source>
        <strain>K12 / MC4100 / BW2952</strain>
    </source>
</reference>
<proteinExistence type="inferred from homology"/>
<comment type="function">
    <text evidence="1">Binds RpoD and negatively regulates RpoD-mediated transcription activation by preventing the interaction between the primary sigma factor RpoD with the catalytic core of the RNA polymerase and with promoter DNA. May be involved in replacement of the RNA polymerase sigma subunit from RpoD to RpoS during the transition from exponential growth to the stationary phase.</text>
</comment>
<comment type="subunit">
    <text evidence="1">Interacts with RpoD.</text>
</comment>
<comment type="subcellular location">
    <subcellularLocation>
        <location evidence="1">Cytoplasm</location>
    </subcellularLocation>
</comment>
<comment type="similarity">
    <text evidence="1">Belongs to the Rsd/AlgQ family.</text>
</comment>
<keyword id="KW-0963">Cytoplasm</keyword>
<keyword id="KW-0804">Transcription</keyword>
<keyword id="KW-0805">Transcription regulation</keyword>